<evidence type="ECO:0000250" key="1"/>
<evidence type="ECO:0000250" key="2">
    <source>
        <dbReference type="UniProtKB" id="P05089"/>
    </source>
</evidence>
<evidence type="ECO:0000250" key="3">
    <source>
        <dbReference type="UniProtKB" id="P53608"/>
    </source>
</evidence>
<evidence type="ECO:0000250" key="4">
    <source>
        <dbReference type="UniProtKB" id="P78540"/>
    </source>
</evidence>
<evidence type="ECO:0000250" key="5">
    <source>
        <dbReference type="UniProtKB" id="Q61176"/>
    </source>
</evidence>
<evidence type="ECO:0000255" key="6">
    <source>
        <dbReference type="PROSITE-ProRule" id="PRU00742"/>
    </source>
</evidence>
<evidence type="ECO:0000256" key="7">
    <source>
        <dbReference type="SAM" id="MobiDB-lite"/>
    </source>
</evidence>
<proteinExistence type="evidence at transcript level"/>
<comment type="catalytic activity">
    <reaction evidence="2">
        <text>L-arginine + H2O = urea + L-ornithine</text>
        <dbReference type="Rhea" id="RHEA:20569"/>
        <dbReference type="ChEBI" id="CHEBI:15377"/>
        <dbReference type="ChEBI" id="CHEBI:16199"/>
        <dbReference type="ChEBI" id="CHEBI:32682"/>
        <dbReference type="ChEBI" id="CHEBI:46911"/>
        <dbReference type="EC" id="3.5.3.1"/>
    </reaction>
</comment>
<comment type="cofactor">
    <cofactor evidence="6">
        <name>Mn(2+)</name>
        <dbReference type="ChEBI" id="CHEBI:29035"/>
    </cofactor>
    <text evidence="6">Binds 2 manganese ions per subunit.</text>
</comment>
<comment type="pathway">
    <text evidence="2">Nitrogen metabolism; urea cycle; L-ornithine and urea from L-arginine: step 1/1.</text>
</comment>
<comment type="subunit">
    <text evidence="1 2">Homotrimer (By similarity). Interacts with CMTM6 (By similarity).</text>
</comment>
<comment type="subcellular location">
    <subcellularLocation>
        <location evidence="1">Cytoplasm</location>
    </subcellularLocation>
</comment>
<comment type="similarity">
    <text evidence="6">Belongs to the arginase family.</text>
</comment>
<dbReference type="EC" id="3.5.3.1" evidence="2"/>
<dbReference type="EMBL" id="AY039112">
    <property type="protein sequence ID" value="AAK91874.1"/>
    <property type="molecule type" value="mRNA"/>
</dbReference>
<dbReference type="RefSeq" id="NP_999213.1">
    <property type="nucleotide sequence ID" value="NM_214048.2"/>
</dbReference>
<dbReference type="RefSeq" id="XP_005659247.1">
    <property type="nucleotide sequence ID" value="XM_005659190.2"/>
</dbReference>
<dbReference type="RefSeq" id="XP_020938398.1">
    <property type="nucleotide sequence ID" value="XM_021082739.1"/>
</dbReference>
<dbReference type="RefSeq" id="XP_020938404.1">
    <property type="nucleotide sequence ID" value="XM_021082745.1"/>
</dbReference>
<dbReference type="RefSeq" id="XP_020938406.1">
    <property type="nucleotide sequence ID" value="XM_021082747.1"/>
</dbReference>
<dbReference type="SMR" id="Q95JC8"/>
<dbReference type="FunCoup" id="Q95JC8">
    <property type="interactions" value="144"/>
</dbReference>
<dbReference type="STRING" id="9823.ENSSSCP00000029011"/>
<dbReference type="PaxDb" id="9823-ENSSSCP00000004530"/>
<dbReference type="PeptideAtlas" id="Q95JC8"/>
<dbReference type="Ensembl" id="ENSSSCT00000004636.5">
    <property type="protein sequence ID" value="ENSSSCP00000004530.2"/>
    <property type="gene ID" value="ENSSSCG00000004195.5"/>
</dbReference>
<dbReference type="Ensembl" id="ENSSSCT00015077075.1">
    <property type="protein sequence ID" value="ENSSSCP00015031012.1"/>
    <property type="gene ID" value="ENSSSCG00015057664.1"/>
</dbReference>
<dbReference type="Ensembl" id="ENSSSCT00025000287.1">
    <property type="protein sequence ID" value="ENSSSCP00025000095.1"/>
    <property type="gene ID" value="ENSSSCG00025000224.1"/>
</dbReference>
<dbReference type="Ensembl" id="ENSSSCT00035071810.1">
    <property type="protein sequence ID" value="ENSSSCP00035029140.1"/>
    <property type="gene ID" value="ENSSSCG00035053824.1"/>
</dbReference>
<dbReference type="Ensembl" id="ENSSSCT00045012908.1">
    <property type="protein sequence ID" value="ENSSSCP00045008882.1"/>
    <property type="gene ID" value="ENSSSCG00045007689.1"/>
</dbReference>
<dbReference type="Ensembl" id="ENSSSCT00055027949.1">
    <property type="protein sequence ID" value="ENSSSCP00055022261.1"/>
    <property type="gene ID" value="ENSSSCG00055014125.1"/>
</dbReference>
<dbReference type="Ensembl" id="ENSSSCT00065085231.1">
    <property type="protein sequence ID" value="ENSSSCP00065037231.1"/>
    <property type="gene ID" value="ENSSSCG00065062146.1"/>
</dbReference>
<dbReference type="Ensembl" id="ENSSSCT00070039531.1">
    <property type="protein sequence ID" value="ENSSSCP00070033112.1"/>
    <property type="gene ID" value="ENSSSCG00070019904.1"/>
</dbReference>
<dbReference type="Ensembl" id="ENSSSCT00070039536.1">
    <property type="protein sequence ID" value="ENSSSCP00070033115.1"/>
    <property type="gene ID" value="ENSSSCG00070019904.1"/>
</dbReference>
<dbReference type="Ensembl" id="ENSSSCT00105048971">
    <property type="protein sequence ID" value="ENSSSCP00105034450"/>
    <property type="gene ID" value="ENSSSCG00105025762"/>
</dbReference>
<dbReference type="Ensembl" id="ENSSSCT00110020186">
    <property type="protein sequence ID" value="ENSSSCP00110013640"/>
    <property type="gene ID" value="ENSSSCG00110010501"/>
</dbReference>
<dbReference type="Ensembl" id="ENSSSCT00115003957">
    <property type="protein sequence ID" value="ENSSSCP00115003644"/>
    <property type="gene ID" value="ENSSSCG00115002368"/>
</dbReference>
<dbReference type="Ensembl" id="ENSSSCT00130054532">
    <property type="protein sequence ID" value="ENSSSCP00130039060"/>
    <property type="gene ID" value="ENSSSCG00130027910"/>
</dbReference>
<dbReference type="GeneID" id="397115"/>
<dbReference type="KEGG" id="ssc:397115"/>
<dbReference type="CTD" id="383"/>
<dbReference type="VGNC" id="VGNC:85454">
    <property type="gene designation" value="ARG1"/>
</dbReference>
<dbReference type="eggNOG" id="KOG2965">
    <property type="taxonomic scope" value="Eukaryota"/>
</dbReference>
<dbReference type="GeneTree" id="ENSGT00950000183195"/>
<dbReference type="HOGENOM" id="CLU_039478_6_1_1"/>
<dbReference type="InParanoid" id="Q95JC8"/>
<dbReference type="OMA" id="FSWMTPC"/>
<dbReference type="OrthoDB" id="9992747at2759"/>
<dbReference type="TreeFam" id="TF300034"/>
<dbReference type="Reactome" id="R-SSC-6798695">
    <property type="pathway name" value="Neutrophil degranulation"/>
</dbReference>
<dbReference type="Reactome" id="R-SSC-70635">
    <property type="pathway name" value="Urea cycle"/>
</dbReference>
<dbReference type="SABIO-RK" id="Q95JC8"/>
<dbReference type="UniPathway" id="UPA00158">
    <property type="reaction ID" value="UER00270"/>
</dbReference>
<dbReference type="ChiTaRS" id="ARG1">
    <property type="organism name" value="pig"/>
</dbReference>
<dbReference type="Proteomes" id="UP000008227">
    <property type="component" value="Chromosome 1"/>
</dbReference>
<dbReference type="Proteomes" id="UP000314985">
    <property type="component" value="Chromosome 1"/>
</dbReference>
<dbReference type="Proteomes" id="UP000694570">
    <property type="component" value="Unplaced"/>
</dbReference>
<dbReference type="Proteomes" id="UP000694571">
    <property type="component" value="Unplaced"/>
</dbReference>
<dbReference type="Proteomes" id="UP000694720">
    <property type="component" value="Unplaced"/>
</dbReference>
<dbReference type="Proteomes" id="UP000694722">
    <property type="component" value="Unplaced"/>
</dbReference>
<dbReference type="Proteomes" id="UP000694723">
    <property type="component" value="Unplaced"/>
</dbReference>
<dbReference type="Proteomes" id="UP000694724">
    <property type="component" value="Unplaced"/>
</dbReference>
<dbReference type="Proteomes" id="UP000694725">
    <property type="component" value="Unplaced"/>
</dbReference>
<dbReference type="Proteomes" id="UP000694726">
    <property type="component" value="Unplaced"/>
</dbReference>
<dbReference type="Proteomes" id="UP000694727">
    <property type="component" value="Unplaced"/>
</dbReference>
<dbReference type="Proteomes" id="UP000694728">
    <property type="component" value="Unplaced"/>
</dbReference>
<dbReference type="Bgee" id="ENSSSCG00000004195">
    <property type="expression patterns" value="Expressed in liver and 23 other cell types or tissues"/>
</dbReference>
<dbReference type="ExpressionAtlas" id="Q95JC8">
    <property type="expression patterns" value="baseline and differential"/>
</dbReference>
<dbReference type="GO" id="GO:0005737">
    <property type="term" value="C:cytoplasm"/>
    <property type="evidence" value="ECO:0000318"/>
    <property type="project" value="GO_Central"/>
</dbReference>
<dbReference type="GO" id="GO:0005829">
    <property type="term" value="C:cytosol"/>
    <property type="evidence" value="ECO:0000318"/>
    <property type="project" value="GO_Central"/>
</dbReference>
<dbReference type="GO" id="GO:0004053">
    <property type="term" value="F:arginase activity"/>
    <property type="evidence" value="ECO:0000318"/>
    <property type="project" value="GO_Central"/>
</dbReference>
<dbReference type="GO" id="GO:0030145">
    <property type="term" value="F:manganese ion binding"/>
    <property type="evidence" value="ECO:0000318"/>
    <property type="project" value="GO_Central"/>
</dbReference>
<dbReference type="GO" id="GO:0019547">
    <property type="term" value="P:arginine catabolic process to ornithine"/>
    <property type="evidence" value="ECO:0000318"/>
    <property type="project" value="GO_Central"/>
</dbReference>
<dbReference type="GO" id="GO:0000050">
    <property type="term" value="P:urea cycle"/>
    <property type="evidence" value="ECO:0007669"/>
    <property type="project" value="UniProtKB-UniPathway"/>
</dbReference>
<dbReference type="CDD" id="cd11587">
    <property type="entry name" value="Arginase-like"/>
    <property type="match status" value="1"/>
</dbReference>
<dbReference type="FunFam" id="3.40.800.10:FF:000011">
    <property type="entry name" value="Arginase-1"/>
    <property type="match status" value="1"/>
</dbReference>
<dbReference type="Gene3D" id="3.40.800.10">
    <property type="entry name" value="Ureohydrolase domain"/>
    <property type="match status" value="1"/>
</dbReference>
<dbReference type="InterPro" id="IPR014033">
    <property type="entry name" value="Arginase"/>
</dbReference>
<dbReference type="InterPro" id="IPR006035">
    <property type="entry name" value="Ureohydrolase"/>
</dbReference>
<dbReference type="InterPro" id="IPR023696">
    <property type="entry name" value="Ureohydrolase_dom_sf"/>
</dbReference>
<dbReference type="InterPro" id="IPR020855">
    <property type="entry name" value="Ureohydrolase_Mn_BS"/>
</dbReference>
<dbReference type="NCBIfam" id="TIGR01229">
    <property type="entry name" value="rocF_arginase"/>
    <property type="match status" value="1"/>
</dbReference>
<dbReference type="PANTHER" id="PTHR43782">
    <property type="entry name" value="ARGINASE"/>
    <property type="match status" value="1"/>
</dbReference>
<dbReference type="PANTHER" id="PTHR43782:SF2">
    <property type="entry name" value="ARGINASE-1"/>
    <property type="match status" value="1"/>
</dbReference>
<dbReference type="Pfam" id="PF00491">
    <property type="entry name" value="Arginase"/>
    <property type="match status" value="1"/>
</dbReference>
<dbReference type="PIRSF" id="PIRSF036979">
    <property type="entry name" value="Arginase"/>
    <property type="match status" value="1"/>
</dbReference>
<dbReference type="PRINTS" id="PR00116">
    <property type="entry name" value="ARGINASE"/>
</dbReference>
<dbReference type="SUPFAM" id="SSF52768">
    <property type="entry name" value="Arginase/deacetylase"/>
    <property type="match status" value="1"/>
</dbReference>
<dbReference type="PROSITE" id="PS01053">
    <property type="entry name" value="ARGINASE_1"/>
    <property type="match status" value="1"/>
</dbReference>
<dbReference type="PROSITE" id="PS51409">
    <property type="entry name" value="ARGINASE_2"/>
    <property type="match status" value="1"/>
</dbReference>
<gene>
    <name type="primary">ARG1</name>
</gene>
<sequence length="322" mass="35018">MSFKSQSIGIIGAPFSKGQPRGGVEEGPTALRKAGLLEKLKEQECDVKDYGDLCFADVPNDTPFQIVKNPRSVGKANQQLADVVAEIKKNGRTSLVLGGDHSMAIGSISGHARVHPDLCVIWVDAHTDINTPLTTTTGNLHGQPVSFLLKELKEKIPEVPGLSWVTPCLSAKDIVYIGLRDVDPAEHYILKTLGIKYFSMIEVDKLGIGKVMEEAFSYLLGRKKRPIHLSFDVDGLDPFFTPATGTPVHGGLSYREGIYITEEIYKTGLLSGLDIMEVNPSLGKTPEEVTRTVNTAVALVLACFGVAREGNHKPIDYLKPPK</sequence>
<organism>
    <name type="scientific">Sus scrofa</name>
    <name type="common">Pig</name>
    <dbReference type="NCBI Taxonomy" id="9823"/>
    <lineage>
        <taxon>Eukaryota</taxon>
        <taxon>Metazoa</taxon>
        <taxon>Chordata</taxon>
        <taxon>Craniata</taxon>
        <taxon>Vertebrata</taxon>
        <taxon>Euteleostomi</taxon>
        <taxon>Mammalia</taxon>
        <taxon>Eutheria</taxon>
        <taxon>Laurasiatheria</taxon>
        <taxon>Artiodactyla</taxon>
        <taxon>Suina</taxon>
        <taxon>Suidae</taxon>
        <taxon>Sus</taxon>
    </lineage>
</organism>
<keyword id="KW-0056">Arginine metabolism</keyword>
<keyword id="KW-0963">Cytoplasm</keyword>
<keyword id="KW-0378">Hydrolase</keyword>
<keyword id="KW-0464">Manganese</keyword>
<keyword id="KW-0479">Metal-binding</keyword>
<keyword id="KW-0597">Phosphoprotein</keyword>
<keyword id="KW-1185">Reference proteome</keyword>
<keyword id="KW-0835">Urea cycle</keyword>
<feature type="chain" id="PRO_0000173695" description="Arginase-1">
    <location>
        <begin position="1"/>
        <end position="322"/>
    </location>
</feature>
<feature type="region of interest" description="Disordered" evidence="7">
    <location>
        <begin position="1"/>
        <end position="27"/>
    </location>
</feature>
<feature type="binding site" evidence="6">
    <location>
        <position position="101"/>
    </location>
    <ligand>
        <name>Mn(2+)</name>
        <dbReference type="ChEBI" id="CHEBI:29035"/>
        <label>1</label>
    </ligand>
</feature>
<feature type="binding site" evidence="6">
    <location>
        <position position="124"/>
    </location>
    <ligand>
        <name>Mn(2+)</name>
        <dbReference type="ChEBI" id="CHEBI:29035"/>
        <label>1</label>
    </ligand>
</feature>
<feature type="binding site" evidence="6">
    <location>
        <position position="124"/>
    </location>
    <ligand>
        <name>Mn(2+)</name>
        <dbReference type="ChEBI" id="CHEBI:29035"/>
        <label>2</label>
    </ligand>
</feature>
<feature type="binding site" evidence="2">
    <location>
        <begin position="126"/>
        <end position="130"/>
    </location>
    <ligand>
        <name>substrate</name>
    </ligand>
</feature>
<feature type="binding site" evidence="6">
    <location>
        <position position="126"/>
    </location>
    <ligand>
        <name>Mn(2+)</name>
        <dbReference type="ChEBI" id="CHEBI:29035"/>
        <label>2</label>
    </ligand>
</feature>
<feature type="binding site" evidence="6">
    <location>
        <position position="128"/>
    </location>
    <ligand>
        <name>Mn(2+)</name>
        <dbReference type="ChEBI" id="CHEBI:29035"/>
        <label>1</label>
    </ligand>
</feature>
<feature type="binding site" evidence="2">
    <location>
        <begin position="137"/>
        <end position="139"/>
    </location>
    <ligand>
        <name>substrate</name>
    </ligand>
</feature>
<feature type="binding site" evidence="2">
    <location>
        <position position="183"/>
    </location>
    <ligand>
        <name>substrate</name>
    </ligand>
</feature>
<feature type="binding site" evidence="6">
    <location>
        <position position="232"/>
    </location>
    <ligand>
        <name>Mn(2+)</name>
        <dbReference type="ChEBI" id="CHEBI:29035"/>
        <label>1</label>
    </ligand>
</feature>
<feature type="binding site" evidence="6">
    <location>
        <position position="232"/>
    </location>
    <ligand>
        <name>Mn(2+)</name>
        <dbReference type="ChEBI" id="CHEBI:29035"/>
        <label>2</label>
    </ligand>
</feature>
<feature type="binding site" evidence="6">
    <location>
        <position position="234"/>
    </location>
    <ligand>
        <name>Mn(2+)</name>
        <dbReference type="ChEBI" id="CHEBI:29035"/>
        <label>2</label>
    </ligand>
</feature>
<feature type="binding site" evidence="3">
    <location>
        <position position="246"/>
    </location>
    <ligand>
        <name>substrate</name>
    </ligand>
</feature>
<feature type="binding site" evidence="4">
    <location>
        <position position="277"/>
    </location>
    <ligand>
        <name>substrate</name>
    </ligand>
</feature>
<feature type="modified residue" description="Phosphoserine" evidence="5">
    <location>
        <position position="7"/>
    </location>
</feature>
<feature type="modified residue" description="N6-succinyllysine" evidence="5">
    <location>
        <position position="17"/>
    </location>
</feature>
<feature type="modified residue" description="Phosphoserine" evidence="5">
    <location>
        <position position="72"/>
    </location>
</feature>
<feature type="modified residue" description="N6-succinyllysine" evidence="5">
    <location>
        <position position="75"/>
    </location>
</feature>
<feature type="modified residue" description="Phosphoserine" evidence="2">
    <location>
        <position position="163"/>
    </location>
</feature>
<feature type="modified residue" description="Phosphoserine" evidence="2">
    <location>
        <position position="217"/>
    </location>
</feature>
<reference key="1">
    <citation type="submission" date="2001-06" db="EMBL/GenBank/DDBJ databases">
        <title>Sequence of pig arginase I.</title>
        <authorList>
            <person name="Kepka-Lenhart D."/>
            <person name="Morris S.M. Jr."/>
        </authorList>
    </citation>
    <scope>NUCLEOTIDE SEQUENCE [MRNA]</scope>
</reference>
<name>ARGI1_PIG</name>
<protein>
    <recommendedName>
        <fullName>Arginase-1</fullName>
        <ecNumber evidence="2">3.5.3.1</ecNumber>
    </recommendedName>
    <alternativeName>
        <fullName>Liver-type arginase</fullName>
    </alternativeName>
    <alternativeName>
        <fullName>Type I arginase</fullName>
    </alternativeName>
</protein>
<accession>Q95JC8</accession>